<organism>
    <name type="scientific">Burkholderia thailandensis (strain ATCC 700388 / DSM 13276 / CCUG 48851 / CIP 106301 / E264)</name>
    <dbReference type="NCBI Taxonomy" id="271848"/>
    <lineage>
        <taxon>Bacteria</taxon>
        <taxon>Pseudomonadati</taxon>
        <taxon>Pseudomonadota</taxon>
        <taxon>Betaproteobacteria</taxon>
        <taxon>Burkholderiales</taxon>
        <taxon>Burkholderiaceae</taxon>
        <taxon>Burkholderia</taxon>
        <taxon>pseudomallei group</taxon>
    </lineage>
</organism>
<accession>Q2T6A1</accession>
<sequence>MNLQKFPRYPLTFGPTPIQPLKRLSAHLGGKVELYAKRDDCNSGLAFGGNKTRKLEYLIPDALAQGCDTLVSIGGIQSNQTRQVAAVAAHLGMKCVLVQENWVNYHDAVYDRVGNIQMSRMMGADVRLVPDGFDIGFRKSWEDALADVRARGGKPYAIPAGCSDHPLGGLGFVGFAEEVRAQEAELGFKFDYVVVCSVTGSTQAGMVVGFAADGRADRVIGIDASAKPAQTREQILRIARNTADRVELGRDIASGDVVLDERFGGPEYGLPNEGTLEAIRLCAKLEGVLTDPVYEGKSMHGMIEKVRLGEFPAGSKVLYAHLGGVPALNAYSFLFRDG</sequence>
<dbReference type="EC" id="3.5.99.7" evidence="1"/>
<dbReference type="EMBL" id="CP000085">
    <property type="protein sequence ID" value="ABC34300.1"/>
    <property type="molecule type" value="Genomic_DNA"/>
</dbReference>
<dbReference type="RefSeq" id="WP_009907543.1">
    <property type="nucleotide sequence ID" value="NC_007650.1"/>
</dbReference>
<dbReference type="SMR" id="Q2T6A1"/>
<dbReference type="GeneID" id="45118558"/>
<dbReference type="KEGG" id="bte:BTH_II1101"/>
<dbReference type="HOGENOM" id="CLU_048897_2_1_4"/>
<dbReference type="Proteomes" id="UP000001930">
    <property type="component" value="Chromosome II"/>
</dbReference>
<dbReference type="GO" id="GO:0008660">
    <property type="term" value="F:1-aminocyclopropane-1-carboxylate deaminase activity"/>
    <property type="evidence" value="ECO:0007669"/>
    <property type="project" value="UniProtKB-UniRule"/>
</dbReference>
<dbReference type="GO" id="GO:0019148">
    <property type="term" value="F:D-cysteine desulfhydrase activity"/>
    <property type="evidence" value="ECO:0007669"/>
    <property type="project" value="TreeGrafter"/>
</dbReference>
<dbReference type="GO" id="GO:0030170">
    <property type="term" value="F:pyridoxal phosphate binding"/>
    <property type="evidence" value="ECO:0007669"/>
    <property type="project" value="InterPro"/>
</dbReference>
<dbReference type="GO" id="GO:0018871">
    <property type="term" value="P:1-aminocyclopropane-1-carboxylate metabolic process"/>
    <property type="evidence" value="ECO:0007669"/>
    <property type="project" value="UniProtKB-UniRule"/>
</dbReference>
<dbReference type="GO" id="GO:0009310">
    <property type="term" value="P:amine catabolic process"/>
    <property type="evidence" value="ECO:0007669"/>
    <property type="project" value="InterPro"/>
</dbReference>
<dbReference type="CDD" id="cd06449">
    <property type="entry name" value="ACCD"/>
    <property type="match status" value="1"/>
</dbReference>
<dbReference type="FunFam" id="3.40.50.1100:FF:000053">
    <property type="entry name" value="1-aminocyclopropane-1-carboxylate deaminase"/>
    <property type="match status" value="1"/>
</dbReference>
<dbReference type="Gene3D" id="3.40.50.1100">
    <property type="match status" value="2"/>
</dbReference>
<dbReference type="HAMAP" id="MF_00807">
    <property type="entry name" value="ACC_deaminase"/>
    <property type="match status" value="1"/>
</dbReference>
<dbReference type="InterPro" id="IPR027278">
    <property type="entry name" value="ACCD_DCysDesulf"/>
</dbReference>
<dbReference type="InterPro" id="IPR005965">
    <property type="entry name" value="ACP_carboxylate_deaminase"/>
</dbReference>
<dbReference type="InterPro" id="IPR020601">
    <property type="entry name" value="ACP_carboxylate_deaminase_bac"/>
</dbReference>
<dbReference type="InterPro" id="IPR001926">
    <property type="entry name" value="TrpB-like_PALP"/>
</dbReference>
<dbReference type="InterPro" id="IPR036052">
    <property type="entry name" value="TrpB-like_PALP_sf"/>
</dbReference>
<dbReference type="NCBIfam" id="TIGR01274">
    <property type="entry name" value="ACC_deam"/>
    <property type="match status" value="1"/>
</dbReference>
<dbReference type="PANTHER" id="PTHR43780">
    <property type="entry name" value="1-AMINOCYCLOPROPANE-1-CARBOXYLATE DEAMINASE-RELATED"/>
    <property type="match status" value="1"/>
</dbReference>
<dbReference type="PANTHER" id="PTHR43780:SF2">
    <property type="entry name" value="1-AMINOCYCLOPROPANE-1-CARBOXYLATE DEAMINASE-RELATED"/>
    <property type="match status" value="1"/>
</dbReference>
<dbReference type="Pfam" id="PF00291">
    <property type="entry name" value="PALP"/>
    <property type="match status" value="1"/>
</dbReference>
<dbReference type="PIRSF" id="PIRSF006278">
    <property type="entry name" value="ACCD_DCysDesulf"/>
    <property type="match status" value="1"/>
</dbReference>
<dbReference type="SUPFAM" id="SSF53686">
    <property type="entry name" value="Tryptophan synthase beta subunit-like PLP-dependent enzymes"/>
    <property type="match status" value="1"/>
</dbReference>
<name>1A1D_BURTA</name>
<protein>
    <recommendedName>
        <fullName evidence="1">1-aminocyclopropane-1-carboxylate deaminase</fullName>
        <shortName evidence="1">ACC deaminase</shortName>
        <shortName evidence="1">ACCD</shortName>
        <ecNumber evidence="1">3.5.99.7</ecNumber>
    </recommendedName>
</protein>
<reference key="1">
    <citation type="journal article" date="2005" name="BMC Genomics">
        <title>Bacterial genome adaptation to niches: divergence of the potential virulence genes in three Burkholderia species of different survival strategies.</title>
        <authorList>
            <person name="Kim H.S."/>
            <person name="Schell M.A."/>
            <person name="Yu Y."/>
            <person name="Ulrich R.L."/>
            <person name="Sarria S.H."/>
            <person name="Nierman W.C."/>
            <person name="DeShazer D."/>
        </authorList>
    </citation>
    <scope>NUCLEOTIDE SEQUENCE [LARGE SCALE GENOMIC DNA]</scope>
    <source>
        <strain>ATCC 700388 / DSM 13276 / CCUG 48851 / CIP 106301 / E264</strain>
    </source>
</reference>
<comment type="function">
    <text evidence="1">Catalyzes a cyclopropane ring-opening reaction, the irreversible conversion of 1-aminocyclopropane-1-carboxylate (ACC) to ammonia and alpha-ketobutyrate. Allows growth on ACC as a nitrogen source.</text>
</comment>
<comment type="catalytic activity">
    <reaction evidence="1">
        <text>1-aminocyclopropane-1-carboxylate + H2O = 2-oxobutanoate + NH4(+)</text>
        <dbReference type="Rhea" id="RHEA:16933"/>
        <dbReference type="ChEBI" id="CHEBI:15377"/>
        <dbReference type="ChEBI" id="CHEBI:16763"/>
        <dbReference type="ChEBI" id="CHEBI:28938"/>
        <dbReference type="ChEBI" id="CHEBI:58360"/>
        <dbReference type="EC" id="3.5.99.7"/>
    </reaction>
</comment>
<comment type="cofactor">
    <cofactor evidence="1">
        <name>pyridoxal 5'-phosphate</name>
        <dbReference type="ChEBI" id="CHEBI:597326"/>
    </cofactor>
</comment>
<comment type="subunit">
    <text evidence="1">Homotrimer.</text>
</comment>
<comment type="similarity">
    <text evidence="1">Belongs to the ACC deaminase/D-cysteine desulfhydrase family.</text>
</comment>
<gene>
    <name evidence="1" type="primary">acdS</name>
    <name type="ordered locus">BTH_II1101</name>
</gene>
<keyword id="KW-0378">Hydrolase</keyword>
<keyword id="KW-0663">Pyridoxal phosphate</keyword>
<feature type="chain" id="PRO_0000304376" description="1-aminocyclopropane-1-carboxylate deaminase">
    <location>
        <begin position="1"/>
        <end position="338"/>
    </location>
</feature>
<feature type="active site" description="Nucleophile" evidence="1">
    <location>
        <position position="78"/>
    </location>
</feature>
<feature type="modified residue" description="N6-(pyridoxal phosphate)lysine" evidence="1">
    <location>
        <position position="51"/>
    </location>
</feature>
<proteinExistence type="inferred from homology"/>
<evidence type="ECO:0000255" key="1">
    <source>
        <dbReference type="HAMAP-Rule" id="MF_00807"/>
    </source>
</evidence>